<keyword id="KW-0963">Cytoplasm</keyword>
<keyword id="KW-0342">GTP-binding</keyword>
<keyword id="KW-0378">Hydrolase</keyword>
<keyword id="KW-0460">Magnesium</keyword>
<keyword id="KW-0479">Metal-binding</keyword>
<keyword id="KW-0547">Nucleotide-binding</keyword>
<comment type="function">
    <text evidence="1">An essential GTPase which binds GTP, GDP and possibly (p)ppGpp with moderate affinity, with high nucleotide exchange rates and a fairly low GTP hydrolysis rate. Plays a role in control of the cell cycle, stress response, ribosome biogenesis and in those bacteria that undergo differentiation, in morphogenesis control.</text>
</comment>
<comment type="cofactor">
    <cofactor evidence="1">
        <name>Mg(2+)</name>
        <dbReference type="ChEBI" id="CHEBI:18420"/>
    </cofactor>
</comment>
<comment type="subunit">
    <text evidence="1">Monomer.</text>
</comment>
<comment type="subcellular location">
    <subcellularLocation>
        <location evidence="1">Cytoplasm</location>
    </subcellularLocation>
</comment>
<comment type="similarity">
    <text evidence="1">Belongs to the TRAFAC class OBG-HflX-like GTPase superfamily. OBG GTPase family.</text>
</comment>
<comment type="sequence caution" evidence="5">
    <conflict type="erroneous initiation">
        <sequence resource="EMBL-CDS" id="BAH05846"/>
    </conflict>
    <text>Extended N-terminus.</text>
</comment>
<name>OBG_CLOK1</name>
<reference key="1">
    <citation type="submission" date="2005-09" db="EMBL/GenBank/DDBJ databases">
        <title>Complete genome sequence of Clostridium kluyveri and comparative genomics of Clostridia species.</title>
        <authorList>
            <person name="Inui M."/>
            <person name="Nonaka H."/>
            <person name="Shinoda Y."/>
            <person name="Ikenaga Y."/>
            <person name="Abe M."/>
            <person name="Naito K."/>
            <person name="Vertes A.A."/>
            <person name="Yukawa H."/>
        </authorList>
    </citation>
    <scope>NUCLEOTIDE SEQUENCE [LARGE SCALE GENOMIC DNA]</scope>
    <source>
        <strain>NBRC 12016</strain>
    </source>
</reference>
<protein>
    <recommendedName>
        <fullName evidence="1">GTPase Obg</fullName>
        <ecNumber evidence="1">3.6.5.-</ecNumber>
    </recommendedName>
    <alternativeName>
        <fullName evidence="1">GTP-binding protein Obg</fullName>
    </alternativeName>
</protein>
<dbReference type="EC" id="3.6.5.-" evidence="1"/>
<dbReference type="EMBL" id="AP009049">
    <property type="protein sequence ID" value="BAH05846.1"/>
    <property type="status" value="ALT_INIT"/>
    <property type="molecule type" value="Genomic_DNA"/>
</dbReference>
<dbReference type="RefSeq" id="WP_012101260.1">
    <property type="nucleotide sequence ID" value="NC_011837.1"/>
</dbReference>
<dbReference type="SMR" id="B9E021"/>
<dbReference type="KEGG" id="ckr:CKR_0795"/>
<dbReference type="HOGENOM" id="CLU_011747_2_1_9"/>
<dbReference type="Proteomes" id="UP000007969">
    <property type="component" value="Chromosome"/>
</dbReference>
<dbReference type="GO" id="GO:0005737">
    <property type="term" value="C:cytoplasm"/>
    <property type="evidence" value="ECO:0007669"/>
    <property type="project" value="UniProtKB-SubCell"/>
</dbReference>
<dbReference type="GO" id="GO:0005525">
    <property type="term" value="F:GTP binding"/>
    <property type="evidence" value="ECO:0007669"/>
    <property type="project" value="UniProtKB-UniRule"/>
</dbReference>
<dbReference type="GO" id="GO:0003924">
    <property type="term" value="F:GTPase activity"/>
    <property type="evidence" value="ECO:0007669"/>
    <property type="project" value="UniProtKB-UniRule"/>
</dbReference>
<dbReference type="GO" id="GO:0000287">
    <property type="term" value="F:magnesium ion binding"/>
    <property type="evidence" value="ECO:0007669"/>
    <property type="project" value="InterPro"/>
</dbReference>
<dbReference type="GO" id="GO:0042254">
    <property type="term" value="P:ribosome biogenesis"/>
    <property type="evidence" value="ECO:0007669"/>
    <property type="project" value="UniProtKB-UniRule"/>
</dbReference>
<dbReference type="CDD" id="cd01898">
    <property type="entry name" value="Obg"/>
    <property type="match status" value="1"/>
</dbReference>
<dbReference type="FunFam" id="2.70.210.12:FF:000001">
    <property type="entry name" value="GTPase Obg"/>
    <property type="match status" value="1"/>
</dbReference>
<dbReference type="Gene3D" id="3.30.300.350">
    <property type="entry name" value="GTP-binding protein OBG, C-terminal domain"/>
    <property type="match status" value="1"/>
</dbReference>
<dbReference type="Gene3D" id="2.70.210.12">
    <property type="entry name" value="GTP1/OBG domain"/>
    <property type="match status" value="1"/>
</dbReference>
<dbReference type="Gene3D" id="3.40.50.300">
    <property type="entry name" value="P-loop containing nucleotide triphosphate hydrolases"/>
    <property type="match status" value="1"/>
</dbReference>
<dbReference type="HAMAP" id="MF_01454">
    <property type="entry name" value="GTPase_Obg"/>
    <property type="match status" value="1"/>
</dbReference>
<dbReference type="InterPro" id="IPR031167">
    <property type="entry name" value="G_OBG"/>
</dbReference>
<dbReference type="InterPro" id="IPR006073">
    <property type="entry name" value="GTP-bd"/>
</dbReference>
<dbReference type="InterPro" id="IPR014100">
    <property type="entry name" value="GTP-bd_Obg/CgtA"/>
</dbReference>
<dbReference type="InterPro" id="IPR036346">
    <property type="entry name" value="GTP-bd_prot_GTP1/OBG_C_sf"/>
</dbReference>
<dbReference type="InterPro" id="IPR006074">
    <property type="entry name" value="GTP1-OBG_CS"/>
</dbReference>
<dbReference type="InterPro" id="IPR006169">
    <property type="entry name" value="GTP1_OBG_dom"/>
</dbReference>
<dbReference type="InterPro" id="IPR036726">
    <property type="entry name" value="GTP1_OBG_dom_sf"/>
</dbReference>
<dbReference type="InterPro" id="IPR045086">
    <property type="entry name" value="OBG_GTPase"/>
</dbReference>
<dbReference type="InterPro" id="IPR015349">
    <property type="entry name" value="OCT_dom"/>
</dbReference>
<dbReference type="InterPro" id="IPR027417">
    <property type="entry name" value="P-loop_NTPase"/>
</dbReference>
<dbReference type="InterPro" id="IPR005225">
    <property type="entry name" value="Small_GTP-bd"/>
</dbReference>
<dbReference type="NCBIfam" id="TIGR02729">
    <property type="entry name" value="Obg_CgtA"/>
    <property type="match status" value="1"/>
</dbReference>
<dbReference type="NCBIfam" id="TIGR03595">
    <property type="entry name" value="Obg_CgtA_exten"/>
    <property type="match status" value="1"/>
</dbReference>
<dbReference type="NCBIfam" id="NF008954">
    <property type="entry name" value="PRK12296.1"/>
    <property type="match status" value="1"/>
</dbReference>
<dbReference type="NCBIfam" id="NF008955">
    <property type="entry name" value="PRK12297.1"/>
    <property type="match status" value="1"/>
</dbReference>
<dbReference type="NCBIfam" id="NF008956">
    <property type="entry name" value="PRK12299.1"/>
    <property type="match status" value="1"/>
</dbReference>
<dbReference type="NCBIfam" id="TIGR00231">
    <property type="entry name" value="small_GTP"/>
    <property type="match status" value="1"/>
</dbReference>
<dbReference type="PANTHER" id="PTHR11702">
    <property type="entry name" value="DEVELOPMENTALLY REGULATED GTP-BINDING PROTEIN-RELATED"/>
    <property type="match status" value="1"/>
</dbReference>
<dbReference type="PANTHER" id="PTHR11702:SF31">
    <property type="entry name" value="MITOCHONDRIAL RIBOSOME-ASSOCIATED GTPASE 2"/>
    <property type="match status" value="1"/>
</dbReference>
<dbReference type="Pfam" id="PF09269">
    <property type="entry name" value="DUF1967"/>
    <property type="match status" value="1"/>
</dbReference>
<dbReference type="Pfam" id="PF01018">
    <property type="entry name" value="GTP1_OBG"/>
    <property type="match status" value="1"/>
</dbReference>
<dbReference type="Pfam" id="PF01926">
    <property type="entry name" value="MMR_HSR1"/>
    <property type="match status" value="1"/>
</dbReference>
<dbReference type="PRINTS" id="PR00326">
    <property type="entry name" value="GTP1OBG"/>
</dbReference>
<dbReference type="SUPFAM" id="SSF102741">
    <property type="entry name" value="Obg GTP-binding protein C-terminal domain"/>
    <property type="match status" value="1"/>
</dbReference>
<dbReference type="SUPFAM" id="SSF82051">
    <property type="entry name" value="Obg GTP-binding protein N-terminal domain"/>
    <property type="match status" value="1"/>
</dbReference>
<dbReference type="SUPFAM" id="SSF52540">
    <property type="entry name" value="P-loop containing nucleoside triphosphate hydrolases"/>
    <property type="match status" value="1"/>
</dbReference>
<dbReference type="PROSITE" id="PS51710">
    <property type="entry name" value="G_OBG"/>
    <property type="match status" value="1"/>
</dbReference>
<dbReference type="PROSITE" id="PS00905">
    <property type="entry name" value="GTP1_OBG"/>
    <property type="match status" value="1"/>
</dbReference>
<dbReference type="PROSITE" id="PS51883">
    <property type="entry name" value="OBG"/>
    <property type="match status" value="1"/>
</dbReference>
<dbReference type="PROSITE" id="PS51881">
    <property type="entry name" value="OCT"/>
    <property type="match status" value="1"/>
</dbReference>
<organism>
    <name type="scientific">Clostridium kluyveri (strain NBRC 12016)</name>
    <dbReference type="NCBI Taxonomy" id="583346"/>
    <lineage>
        <taxon>Bacteria</taxon>
        <taxon>Bacillati</taxon>
        <taxon>Bacillota</taxon>
        <taxon>Clostridia</taxon>
        <taxon>Eubacteriales</taxon>
        <taxon>Clostridiaceae</taxon>
        <taxon>Clostridium</taxon>
    </lineage>
</organism>
<proteinExistence type="inferred from homology"/>
<accession>B9E021</accession>
<evidence type="ECO:0000255" key="1">
    <source>
        <dbReference type="HAMAP-Rule" id="MF_01454"/>
    </source>
</evidence>
<evidence type="ECO:0000255" key="2">
    <source>
        <dbReference type="PROSITE-ProRule" id="PRU01229"/>
    </source>
</evidence>
<evidence type="ECO:0000255" key="3">
    <source>
        <dbReference type="PROSITE-ProRule" id="PRU01231"/>
    </source>
</evidence>
<evidence type="ECO:0000256" key="4">
    <source>
        <dbReference type="SAM" id="MobiDB-lite"/>
    </source>
</evidence>
<evidence type="ECO:0000305" key="5"/>
<sequence length="424" mass="46780">MFVDRAEVFVKSGSGGNGSVSFRREKYVPRGGPDGGDGGKGGDVILVVDPEITTLLDFSYKKKYVAEKGENGSGSKCFGKNGENLYIKVPLGTVIRDVDTNKIMADLSHIGDKYIVAKGGKGGRGNVRFTTAVRQAPDFAEPGMPGEERYISLELKILADVGLLGFPNVGKSTLLSVVTKAAPKIANYHFTTLSPNLGVVNIPGIQSFVIADIPGIIEGAAEGVGLGIDFLRHIERTRLLIHIVDISGLEGRDPFGDFIKINEELKKYDVKLWDRPQIIAANKADMLYDDSIFQDFKKKVENLGYNKVFKISAATRQGVEELMKEAAAMLTNIPVTDMHISEEDKFIPEEKRFTYEIEKQGNVYVVKGSFVDRLLASINVNDANELRYFHKVLQNKGVMKQLIDMGIKDGDVVRLNDFEFDYIL</sequence>
<feature type="chain" id="PRO_0000385848" description="GTPase Obg">
    <location>
        <begin position="1"/>
        <end position="424"/>
    </location>
</feature>
<feature type="domain" description="Obg" evidence="3">
    <location>
        <begin position="1"/>
        <end position="158"/>
    </location>
</feature>
<feature type="domain" description="OBG-type G" evidence="1">
    <location>
        <begin position="159"/>
        <end position="331"/>
    </location>
</feature>
<feature type="domain" description="OCT" evidence="2">
    <location>
        <begin position="345"/>
        <end position="424"/>
    </location>
</feature>
<feature type="region of interest" description="Disordered" evidence="4">
    <location>
        <begin position="21"/>
        <end position="42"/>
    </location>
</feature>
<feature type="compositionally biased region" description="Gly residues" evidence="4">
    <location>
        <begin position="32"/>
        <end position="42"/>
    </location>
</feature>
<feature type="binding site" evidence="1">
    <location>
        <begin position="165"/>
        <end position="172"/>
    </location>
    <ligand>
        <name>GTP</name>
        <dbReference type="ChEBI" id="CHEBI:37565"/>
    </ligand>
</feature>
<feature type="binding site" evidence="1">
    <location>
        <position position="172"/>
    </location>
    <ligand>
        <name>Mg(2+)</name>
        <dbReference type="ChEBI" id="CHEBI:18420"/>
    </ligand>
</feature>
<feature type="binding site" evidence="1">
    <location>
        <begin position="190"/>
        <end position="194"/>
    </location>
    <ligand>
        <name>GTP</name>
        <dbReference type="ChEBI" id="CHEBI:37565"/>
    </ligand>
</feature>
<feature type="binding site" evidence="1">
    <location>
        <position position="192"/>
    </location>
    <ligand>
        <name>Mg(2+)</name>
        <dbReference type="ChEBI" id="CHEBI:18420"/>
    </ligand>
</feature>
<feature type="binding site" evidence="1">
    <location>
        <begin position="212"/>
        <end position="215"/>
    </location>
    <ligand>
        <name>GTP</name>
        <dbReference type="ChEBI" id="CHEBI:37565"/>
    </ligand>
</feature>
<feature type="binding site" evidence="1">
    <location>
        <begin position="282"/>
        <end position="285"/>
    </location>
    <ligand>
        <name>GTP</name>
        <dbReference type="ChEBI" id="CHEBI:37565"/>
    </ligand>
</feature>
<feature type="binding site" evidence="1">
    <location>
        <begin position="312"/>
        <end position="314"/>
    </location>
    <ligand>
        <name>GTP</name>
        <dbReference type="ChEBI" id="CHEBI:37565"/>
    </ligand>
</feature>
<gene>
    <name evidence="1" type="primary">obg</name>
    <name type="ordered locus">CKR_0795</name>
</gene>